<organism>
    <name type="scientific">Photorhabdus laumondii subsp. laumondii (strain DSM 15139 / CIP 105565 / TT01)</name>
    <name type="common">Photorhabdus luminescens subsp. laumondii</name>
    <dbReference type="NCBI Taxonomy" id="243265"/>
    <lineage>
        <taxon>Bacteria</taxon>
        <taxon>Pseudomonadati</taxon>
        <taxon>Pseudomonadota</taxon>
        <taxon>Gammaproteobacteria</taxon>
        <taxon>Enterobacterales</taxon>
        <taxon>Morganellaceae</taxon>
        <taxon>Photorhabdus</taxon>
    </lineage>
</organism>
<feature type="chain" id="PRO_0000163328" description="Ribosome maturation factor RimM">
    <location>
        <begin position="1"/>
        <end position="185"/>
    </location>
</feature>
<feature type="domain" description="PRC barrel" evidence="1">
    <location>
        <begin position="106"/>
        <end position="185"/>
    </location>
</feature>
<name>RIMM_PHOLL</name>
<accession>Q7N799</accession>
<sequence>MVTMSKQTCIELPVNPIVLGKLGSTYGIRGWLRVFSSTEHAEDIFAYQPWFIQRAGRWQHIELEAWKHHNQDMIIKIKGIDDLDAANSLTNCEIIVDSEQLPELDTGDYYWKDLIGCQVISTAGYNLGTVNDMMETGSNDVMVVKANLKDAFGVKERLIPFLDGQVIKKVDLATKTIEVDWDPGF</sequence>
<reference key="1">
    <citation type="journal article" date="2003" name="Nat. Biotechnol.">
        <title>The genome sequence of the entomopathogenic bacterium Photorhabdus luminescens.</title>
        <authorList>
            <person name="Duchaud E."/>
            <person name="Rusniok C."/>
            <person name="Frangeul L."/>
            <person name="Buchrieser C."/>
            <person name="Givaudan A."/>
            <person name="Taourit S."/>
            <person name="Bocs S."/>
            <person name="Boursaux-Eude C."/>
            <person name="Chandler M."/>
            <person name="Charles J.-F."/>
            <person name="Dassa E."/>
            <person name="Derose R."/>
            <person name="Derzelle S."/>
            <person name="Freyssinet G."/>
            <person name="Gaudriault S."/>
            <person name="Medigue C."/>
            <person name="Lanois A."/>
            <person name="Powell K."/>
            <person name="Siguier P."/>
            <person name="Vincent R."/>
            <person name="Wingate V."/>
            <person name="Zouine M."/>
            <person name="Glaser P."/>
            <person name="Boemare N."/>
            <person name="Danchin A."/>
            <person name="Kunst F."/>
        </authorList>
    </citation>
    <scope>NUCLEOTIDE SEQUENCE [LARGE SCALE GENOMIC DNA]</scope>
    <source>
        <strain>DSM 15139 / CIP 105565 / TT01</strain>
    </source>
</reference>
<protein>
    <recommendedName>
        <fullName evidence="1">Ribosome maturation factor RimM</fullName>
    </recommendedName>
</protein>
<keyword id="KW-0143">Chaperone</keyword>
<keyword id="KW-0963">Cytoplasm</keyword>
<keyword id="KW-1185">Reference proteome</keyword>
<keyword id="KW-0690">Ribosome biogenesis</keyword>
<keyword id="KW-0698">rRNA processing</keyword>
<gene>
    <name evidence="1" type="primary">rimM</name>
    <name type="ordered locus">plu1258</name>
</gene>
<proteinExistence type="inferred from homology"/>
<evidence type="ECO:0000255" key="1">
    <source>
        <dbReference type="HAMAP-Rule" id="MF_00014"/>
    </source>
</evidence>
<dbReference type="EMBL" id="BX571863">
    <property type="protein sequence ID" value="CAE13552.1"/>
    <property type="molecule type" value="Genomic_DNA"/>
</dbReference>
<dbReference type="SMR" id="Q7N799"/>
<dbReference type="STRING" id="243265.plu1258"/>
<dbReference type="KEGG" id="plu:plu1258"/>
<dbReference type="eggNOG" id="COG0806">
    <property type="taxonomic scope" value="Bacteria"/>
</dbReference>
<dbReference type="HOGENOM" id="CLU_077636_1_0_6"/>
<dbReference type="Proteomes" id="UP000002514">
    <property type="component" value="Chromosome"/>
</dbReference>
<dbReference type="GO" id="GO:0005737">
    <property type="term" value="C:cytoplasm"/>
    <property type="evidence" value="ECO:0007669"/>
    <property type="project" value="UniProtKB-SubCell"/>
</dbReference>
<dbReference type="GO" id="GO:0005840">
    <property type="term" value="C:ribosome"/>
    <property type="evidence" value="ECO:0007669"/>
    <property type="project" value="InterPro"/>
</dbReference>
<dbReference type="GO" id="GO:0043022">
    <property type="term" value="F:ribosome binding"/>
    <property type="evidence" value="ECO:0007669"/>
    <property type="project" value="InterPro"/>
</dbReference>
<dbReference type="GO" id="GO:0042274">
    <property type="term" value="P:ribosomal small subunit biogenesis"/>
    <property type="evidence" value="ECO:0007669"/>
    <property type="project" value="UniProtKB-UniRule"/>
</dbReference>
<dbReference type="GO" id="GO:0006364">
    <property type="term" value="P:rRNA processing"/>
    <property type="evidence" value="ECO:0007669"/>
    <property type="project" value="UniProtKB-UniRule"/>
</dbReference>
<dbReference type="FunFam" id="2.30.30.240:FF:000001">
    <property type="entry name" value="Ribosome maturation factor RimM"/>
    <property type="match status" value="1"/>
</dbReference>
<dbReference type="FunFam" id="2.40.30.60:FF:000001">
    <property type="entry name" value="Ribosome maturation factor RimM"/>
    <property type="match status" value="1"/>
</dbReference>
<dbReference type="Gene3D" id="2.30.30.240">
    <property type="entry name" value="PRC-barrel domain"/>
    <property type="match status" value="1"/>
</dbReference>
<dbReference type="Gene3D" id="2.40.30.60">
    <property type="entry name" value="RimM"/>
    <property type="match status" value="1"/>
</dbReference>
<dbReference type="HAMAP" id="MF_00014">
    <property type="entry name" value="Ribosome_mat_RimM"/>
    <property type="match status" value="1"/>
</dbReference>
<dbReference type="InterPro" id="IPR027275">
    <property type="entry name" value="PRC-brl_dom"/>
</dbReference>
<dbReference type="InterPro" id="IPR011033">
    <property type="entry name" value="PRC_barrel-like_sf"/>
</dbReference>
<dbReference type="InterPro" id="IPR011961">
    <property type="entry name" value="RimM"/>
</dbReference>
<dbReference type="InterPro" id="IPR002676">
    <property type="entry name" value="RimM_N"/>
</dbReference>
<dbReference type="InterPro" id="IPR036976">
    <property type="entry name" value="RimM_N_sf"/>
</dbReference>
<dbReference type="InterPro" id="IPR009000">
    <property type="entry name" value="Transl_B-barrel_sf"/>
</dbReference>
<dbReference type="NCBIfam" id="TIGR02273">
    <property type="entry name" value="16S_RimM"/>
    <property type="match status" value="1"/>
</dbReference>
<dbReference type="PANTHER" id="PTHR33692">
    <property type="entry name" value="RIBOSOME MATURATION FACTOR RIMM"/>
    <property type="match status" value="1"/>
</dbReference>
<dbReference type="PANTHER" id="PTHR33692:SF1">
    <property type="entry name" value="RIBOSOME MATURATION FACTOR RIMM"/>
    <property type="match status" value="1"/>
</dbReference>
<dbReference type="Pfam" id="PF05239">
    <property type="entry name" value="PRC"/>
    <property type="match status" value="1"/>
</dbReference>
<dbReference type="Pfam" id="PF01782">
    <property type="entry name" value="RimM"/>
    <property type="match status" value="1"/>
</dbReference>
<dbReference type="SUPFAM" id="SSF50346">
    <property type="entry name" value="PRC-barrel domain"/>
    <property type="match status" value="1"/>
</dbReference>
<dbReference type="SUPFAM" id="SSF50447">
    <property type="entry name" value="Translation proteins"/>
    <property type="match status" value="1"/>
</dbReference>
<comment type="function">
    <text evidence="1">An accessory protein needed during the final step in the assembly of 30S ribosomal subunit, possibly for assembly of the head region. Essential for efficient processing of 16S rRNA. May be needed both before and after RbfA during the maturation of 16S rRNA. It has affinity for free ribosomal 30S subunits but not for 70S ribosomes.</text>
</comment>
<comment type="subunit">
    <text evidence="1">Binds ribosomal protein uS19.</text>
</comment>
<comment type="subcellular location">
    <subcellularLocation>
        <location evidence="1">Cytoplasm</location>
    </subcellularLocation>
</comment>
<comment type="domain">
    <text evidence="1">The PRC barrel domain binds ribosomal protein uS19.</text>
</comment>
<comment type="similarity">
    <text evidence="1">Belongs to the RimM family.</text>
</comment>